<comment type="function">
    <text evidence="1">Participates actively in the response to hyperosmotic and heat shock by preventing the aggregation of stress-denatured proteins, in association with DnaK and GrpE. It is the nucleotide exchange factor for DnaK and may function as a thermosensor. Unfolded proteins bind initially to DnaJ; upon interaction with the DnaJ-bound protein, DnaK hydrolyzes its bound ATP, resulting in the formation of a stable complex. GrpE releases ADP from DnaK; ATP binding to DnaK triggers the release of the substrate protein, thus completing the reaction cycle. Several rounds of ATP-dependent interactions between DnaJ, DnaK and GrpE are required for fully efficient folding.</text>
</comment>
<comment type="subunit">
    <text evidence="1">Homodimer.</text>
</comment>
<comment type="subcellular location">
    <subcellularLocation>
        <location evidence="1">Cytoplasm</location>
    </subcellularLocation>
</comment>
<comment type="similarity">
    <text evidence="1">Belongs to the GrpE family.</text>
</comment>
<evidence type="ECO:0000255" key="1">
    <source>
        <dbReference type="HAMAP-Rule" id="MF_01151"/>
    </source>
</evidence>
<gene>
    <name evidence="1" type="primary">grpE</name>
    <name type="ordered locus">LMHCC_1096</name>
</gene>
<sequence>MSEKKNKKEKLADEIEQEELNILDETEETVEEEAAADTLTEEQAKILELENKLDEVENRYLRMQADFENVKKRHIADRDASQKYRSQSLAQDLLPALDSFEKALATTSDQEEVKQILKGMEMVYNQILVAFEKEGIEVIPAVGEQFDPNFHQAVMQDSDENAGSNEITAELQKGYKLKDRVIRPSMVKVNQ</sequence>
<protein>
    <recommendedName>
        <fullName evidence="1">Protein GrpE</fullName>
    </recommendedName>
    <alternativeName>
        <fullName evidence="1">HSP-70 cofactor</fullName>
    </alternativeName>
</protein>
<keyword id="KW-0143">Chaperone</keyword>
<keyword id="KW-0963">Cytoplasm</keyword>
<keyword id="KW-0346">Stress response</keyword>
<proteinExistence type="inferred from homology"/>
<dbReference type="EMBL" id="CP001175">
    <property type="protein sequence ID" value="ACK39444.1"/>
    <property type="molecule type" value="Genomic_DNA"/>
</dbReference>
<dbReference type="RefSeq" id="WP_012581306.1">
    <property type="nucleotide sequence ID" value="NC_011660.1"/>
</dbReference>
<dbReference type="SMR" id="B8DE37"/>
<dbReference type="KEGG" id="lmh:LMHCC_1096"/>
<dbReference type="HOGENOM" id="CLU_057217_5_2_9"/>
<dbReference type="GO" id="GO:0005737">
    <property type="term" value="C:cytoplasm"/>
    <property type="evidence" value="ECO:0007669"/>
    <property type="project" value="UniProtKB-SubCell"/>
</dbReference>
<dbReference type="GO" id="GO:0000774">
    <property type="term" value="F:adenyl-nucleotide exchange factor activity"/>
    <property type="evidence" value="ECO:0007669"/>
    <property type="project" value="InterPro"/>
</dbReference>
<dbReference type="GO" id="GO:0042803">
    <property type="term" value="F:protein homodimerization activity"/>
    <property type="evidence" value="ECO:0007669"/>
    <property type="project" value="InterPro"/>
</dbReference>
<dbReference type="GO" id="GO:0051087">
    <property type="term" value="F:protein-folding chaperone binding"/>
    <property type="evidence" value="ECO:0007669"/>
    <property type="project" value="InterPro"/>
</dbReference>
<dbReference type="GO" id="GO:0051082">
    <property type="term" value="F:unfolded protein binding"/>
    <property type="evidence" value="ECO:0007669"/>
    <property type="project" value="TreeGrafter"/>
</dbReference>
<dbReference type="GO" id="GO:0006457">
    <property type="term" value="P:protein folding"/>
    <property type="evidence" value="ECO:0007669"/>
    <property type="project" value="InterPro"/>
</dbReference>
<dbReference type="CDD" id="cd00446">
    <property type="entry name" value="GrpE"/>
    <property type="match status" value="1"/>
</dbReference>
<dbReference type="FunFam" id="2.30.22.10:FF:000001">
    <property type="entry name" value="Protein GrpE"/>
    <property type="match status" value="1"/>
</dbReference>
<dbReference type="FunFam" id="3.90.20.20:FF:000002">
    <property type="entry name" value="Protein GrpE"/>
    <property type="match status" value="1"/>
</dbReference>
<dbReference type="Gene3D" id="3.90.20.20">
    <property type="match status" value="1"/>
</dbReference>
<dbReference type="Gene3D" id="2.30.22.10">
    <property type="entry name" value="Head domain of nucleotide exchange factor GrpE"/>
    <property type="match status" value="1"/>
</dbReference>
<dbReference type="HAMAP" id="MF_01151">
    <property type="entry name" value="GrpE"/>
    <property type="match status" value="1"/>
</dbReference>
<dbReference type="InterPro" id="IPR000740">
    <property type="entry name" value="GrpE"/>
</dbReference>
<dbReference type="InterPro" id="IPR013805">
    <property type="entry name" value="GrpE_coiled_coil"/>
</dbReference>
<dbReference type="InterPro" id="IPR009012">
    <property type="entry name" value="GrpE_head"/>
</dbReference>
<dbReference type="NCBIfam" id="NF010738">
    <property type="entry name" value="PRK14140.1"/>
    <property type="match status" value="1"/>
</dbReference>
<dbReference type="PANTHER" id="PTHR21237">
    <property type="entry name" value="GRPE PROTEIN"/>
    <property type="match status" value="1"/>
</dbReference>
<dbReference type="PANTHER" id="PTHR21237:SF23">
    <property type="entry name" value="GRPE PROTEIN HOMOLOG, MITOCHONDRIAL"/>
    <property type="match status" value="1"/>
</dbReference>
<dbReference type="Pfam" id="PF01025">
    <property type="entry name" value="GrpE"/>
    <property type="match status" value="1"/>
</dbReference>
<dbReference type="PRINTS" id="PR00773">
    <property type="entry name" value="GRPEPROTEIN"/>
</dbReference>
<dbReference type="SUPFAM" id="SSF58014">
    <property type="entry name" value="Coiled-coil domain of nucleotide exchange factor GrpE"/>
    <property type="match status" value="1"/>
</dbReference>
<dbReference type="SUPFAM" id="SSF51064">
    <property type="entry name" value="Head domain of nucleotide exchange factor GrpE"/>
    <property type="match status" value="1"/>
</dbReference>
<dbReference type="PROSITE" id="PS01071">
    <property type="entry name" value="GRPE"/>
    <property type="match status" value="1"/>
</dbReference>
<feature type="chain" id="PRO_1000164200" description="Protein GrpE">
    <location>
        <begin position="1"/>
        <end position="191"/>
    </location>
</feature>
<organism>
    <name type="scientific">Listeria monocytogenes serotype 4a (strain HCC23)</name>
    <dbReference type="NCBI Taxonomy" id="552536"/>
    <lineage>
        <taxon>Bacteria</taxon>
        <taxon>Bacillati</taxon>
        <taxon>Bacillota</taxon>
        <taxon>Bacilli</taxon>
        <taxon>Bacillales</taxon>
        <taxon>Listeriaceae</taxon>
        <taxon>Listeria</taxon>
    </lineage>
</organism>
<name>GRPE_LISMH</name>
<reference key="1">
    <citation type="journal article" date="2011" name="J. Bacteriol.">
        <title>Genome sequence of lineage III Listeria monocytogenes strain HCC23.</title>
        <authorList>
            <person name="Steele C.L."/>
            <person name="Donaldson J.R."/>
            <person name="Paul D."/>
            <person name="Banes M.M."/>
            <person name="Arick T."/>
            <person name="Bridges S.M."/>
            <person name="Lawrence M.L."/>
        </authorList>
    </citation>
    <scope>NUCLEOTIDE SEQUENCE [LARGE SCALE GENOMIC DNA]</scope>
    <source>
        <strain>HCC23</strain>
    </source>
</reference>
<accession>B8DE37</accession>